<gene>
    <name evidence="1" type="primary">rnpA</name>
    <name type="ordered locus">Shewana3_0008</name>
</gene>
<sequence length="118" mass="13828">MTSYTFTRELRLLTPAQFKSVFSNPIKASSAEITLLAIPNSEQHPRLGLTVAKRYVKRANQRNRIKRVIRDSFRLNQHDIPHLDIVVLVRNGVMEMENAEINKLIEKLWRKLSRRYNG</sequence>
<reference key="1">
    <citation type="submission" date="2006-09" db="EMBL/GenBank/DDBJ databases">
        <title>Complete sequence of chromosome 1 of Shewanella sp. ANA-3.</title>
        <authorList>
            <person name="Copeland A."/>
            <person name="Lucas S."/>
            <person name="Lapidus A."/>
            <person name="Barry K."/>
            <person name="Detter J.C."/>
            <person name="Glavina del Rio T."/>
            <person name="Hammon N."/>
            <person name="Israni S."/>
            <person name="Dalin E."/>
            <person name="Tice H."/>
            <person name="Pitluck S."/>
            <person name="Chertkov O."/>
            <person name="Brettin T."/>
            <person name="Bruce D."/>
            <person name="Han C."/>
            <person name="Tapia R."/>
            <person name="Gilna P."/>
            <person name="Schmutz J."/>
            <person name="Larimer F."/>
            <person name="Land M."/>
            <person name="Hauser L."/>
            <person name="Kyrpides N."/>
            <person name="Kim E."/>
            <person name="Newman D."/>
            <person name="Salticov C."/>
            <person name="Konstantinidis K."/>
            <person name="Klappenback J."/>
            <person name="Tiedje J."/>
            <person name="Richardson P."/>
        </authorList>
    </citation>
    <scope>NUCLEOTIDE SEQUENCE [LARGE SCALE GENOMIC DNA]</scope>
    <source>
        <strain>ANA-3</strain>
    </source>
</reference>
<keyword id="KW-0255">Endonuclease</keyword>
<keyword id="KW-0378">Hydrolase</keyword>
<keyword id="KW-0540">Nuclease</keyword>
<keyword id="KW-0694">RNA-binding</keyword>
<keyword id="KW-0819">tRNA processing</keyword>
<feature type="chain" id="PRO_1000021461" description="Ribonuclease P protein component">
    <location>
        <begin position="1"/>
        <end position="118"/>
    </location>
</feature>
<name>RNPA_SHESA</name>
<protein>
    <recommendedName>
        <fullName evidence="1">Ribonuclease P protein component</fullName>
        <shortName evidence="1">RNase P protein</shortName>
        <shortName evidence="1">RNaseP protein</shortName>
        <ecNumber evidence="1">3.1.26.5</ecNumber>
    </recommendedName>
    <alternativeName>
        <fullName evidence="1">Protein C5</fullName>
    </alternativeName>
</protein>
<evidence type="ECO:0000255" key="1">
    <source>
        <dbReference type="HAMAP-Rule" id="MF_00227"/>
    </source>
</evidence>
<organism>
    <name type="scientific">Shewanella sp. (strain ANA-3)</name>
    <dbReference type="NCBI Taxonomy" id="94122"/>
    <lineage>
        <taxon>Bacteria</taxon>
        <taxon>Pseudomonadati</taxon>
        <taxon>Pseudomonadota</taxon>
        <taxon>Gammaproteobacteria</taxon>
        <taxon>Alteromonadales</taxon>
        <taxon>Shewanellaceae</taxon>
        <taxon>Shewanella</taxon>
    </lineage>
</organism>
<accession>A0KR34</accession>
<dbReference type="EC" id="3.1.26.5" evidence="1"/>
<dbReference type="EMBL" id="CP000469">
    <property type="protein sequence ID" value="ABK46253.1"/>
    <property type="molecule type" value="Genomic_DNA"/>
</dbReference>
<dbReference type="RefSeq" id="WP_007652336.1">
    <property type="nucleotide sequence ID" value="NC_008577.1"/>
</dbReference>
<dbReference type="SMR" id="A0KR34"/>
<dbReference type="STRING" id="94122.Shewana3_0008"/>
<dbReference type="GeneID" id="94725975"/>
<dbReference type="KEGG" id="shn:Shewana3_0008"/>
<dbReference type="eggNOG" id="COG0594">
    <property type="taxonomic scope" value="Bacteria"/>
</dbReference>
<dbReference type="HOGENOM" id="CLU_117179_11_0_6"/>
<dbReference type="OrthoDB" id="9796422at2"/>
<dbReference type="Proteomes" id="UP000002589">
    <property type="component" value="Chromosome"/>
</dbReference>
<dbReference type="GO" id="GO:0030677">
    <property type="term" value="C:ribonuclease P complex"/>
    <property type="evidence" value="ECO:0007669"/>
    <property type="project" value="TreeGrafter"/>
</dbReference>
<dbReference type="GO" id="GO:0042781">
    <property type="term" value="F:3'-tRNA processing endoribonuclease activity"/>
    <property type="evidence" value="ECO:0007669"/>
    <property type="project" value="TreeGrafter"/>
</dbReference>
<dbReference type="GO" id="GO:0004526">
    <property type="term" value="F:ribonuclease P activity"/>
    <property type="evidence" value="ECO:0007669"/>
    <property type="project" value="UniProtKB-UniRule"/>
</dbReference>
<dbReference type="GO" id="GO:0000049">
    <property type="term" value="F:tRNA binding"/>
    <property type="evidence" value="ECO:0007669"/>
    <property type="project" value="UniProtKB-UniRule"/>
</dbReference>
<dbReference type="GO" id="GO:0001682">
    <property type="term" value="P:tRNA 5'-leader removal"/>
    <property type="evidence" value="ECO:0007669"/>
    <property type="project" value="UniProtKB-UniRule"/>
</dbReference>
<dbReference type="FunFam" id="3.30.230.10:FF:000016">
    <property type="entry name" value="Ribonuclease P protein component"/>
    <property type="match status" value="1"/>
</dbReference>
<dbReference type="Gene3D" id="3.30.230.10">
    <property type="match status" value="1"/>
</dbReference>
<dbReference type="HAMAP" id="MF_00227">
    <property type="entry name" value="RNase_P"/>
    <property type="match status" value="1"/>
</dbReference>
<dbReference type="InterPro" id="IPR020568">
    <property type="entry name" value="Ribosomal_Su5_D2-typ_SF"/>
</dbReference>
<dbReference type="InterPro" id="IPR014721">
    <property type="entry name" value="Ribsml_uS5_D2-typ_fold_subgr"/>
</dbReference>
<dbReference type="InterPro" id="IPR000100">
    <property type="entry name" value="RNase_P"/>
</dbReference>
<dbReference type="InterPro" id="IPR020539">
    <property type="entry name" value="RNase_P_CS"/>
</dbReference>
<dbReference type="NCBIfam" id="TIGR00188">
    <property type="entry name" value="rnpA"/>
    <property type="match status" value="1"/>
</dbReference>
<dbReference type="PANTHER" id="PTHR33992">
    <property type="entry name" value="RIBONUCLEASE P PROTEIN COMPONENT"/>
    <property type="match status" value="1"/>
</dbReference>
<dbReference type="PANTHER" id="PTHR33992:SF1">
    <property type="entry name" value="RIBONUCLEASE P PROTEIN COMPONENT"/>
    <property type="match status" value="1"/>
</dbReference>
<dbReference type="Pfam" id="PF00825">
    <property type="entry name" value="Ribonuclease_P"/>
    <property type="match status" value="1"/>
</dbReference>
<dbReference type="SUPFAM" id="SSF54211">
    <property type="entry name" value="Ribosomal protein S5 domain 2-like"/>
    <property type="match status" value="1"/>
</dbReference>
<dbReference type="PROSITE" id="PS00648">
    <property type="entry name" value="RIBONUCLEASE_P"/>
    <property type="match status" value="1"/>
</dbReference>
<comment type="function">
    <text evidence="1">RNaseP catalyzes the removal of the 5'-leader sequence from pre-tRNA to produce the mature 5'-terminus. It can also cleave other RNA substrates such as 4.5S RNA. The protein component plays an auxiliary but essential role in vivo by binding to the 5'-leader sequence and broadening the substrate specificity of the ribozyme.</text>
</comment>
<comment type="catalytic activity">
    <reaction evidence="1">
        <text>Endonucleolytic cleavage of RNA, removing 5'-extranucleotides from tRNA precursor.</text>
        <dbReference type="EC" id="3.1.26.5"/>
    </reaction>
</comment>
<comment type="subunit">
    <text evidence="1">Consists of a catalytic RNA component (M1 or rnpB) and a protein subunit.</text>
</comment>
<comment type="similarity">
    <text evidence="1">Belongs to the RnpA family.</text>
</comment>
<proteinExistence type="inferred from homology"/>